<comment type="function">
    <text evidence="1">Catalyzes the base-exchange of a guanine (G) residue with the queuine precursor 7-aminomethyl-7-deazaguanine (PreQ1) at position 34 (anticodon wobble position) in tRNAs with GU(N) anticodons (tRNA-Asp, -Asn, -His and -Tyr). Catalysis occurs through a double-displacement mechanism. The nucleophile active site attacks the C1' of nucleotide 34 to detach the guanine base from the RNA, forming a covalent enzyme-RNA intermediate. The proton acceptor active site deprotonates the incoming PreQ1, allowing a nucleophilic attack on the C1' of the ribose to form the product. After dissociation, two additional enzymatic reactions on the tRNA convert PreQ1 to queuine (Q), resulting in the hypermodified nucleoside queuosine (7-(((4,5-cis-dihydroxy-2-cyclopenten-1-yl)amino)methyl)-7-deazaguanosine).</text>
</comment>
<comment type="catalytic activity">
    <reaction evidence="1">
        <text>7-aminomethyl-7-carbaguanine + guanosine(34) in tRNA = 7-aminomethyl-7-carbaguanosine(34) in tRNA + guanine</text>
        <dbReference type="Rhea" id="RHEA:24104"/>
        <dbReference type="Rhea" id="RHEA-COMP:10341"/>
        <dbReference type="Rhea" id="RHEA-COMP:10342"/>
        <dbReference type="ChEBI" id="CHEBI:16235"/>
        <dbReference type="ChEBI" id="CHEBI:58703"/>
        <dbReference type="ChEBI" id="CHEBI:74269"/>
        <dbReference type="ChEBI" id="CHEBI:82833"/>
        <dbReference type="EC" id="2.4.2.29"/>
    </reaction>
</comment>
<comment type="cofactor">
    <cofactor evidence="1">
        <name>Zn(2+)</name>
        <dbReference type="ChEBI" id="CHEBI:29105"/>
    </cofactor>
    <text evidence="1">Binds 1 zinc ion per subunit.</text>
</comment>
<comment type="pathway">
    <text evidence="1">tRNA modification; tRNA-queuosine biosynthesis.</text>
</comment>
<comment type="subunit">
    <text evidence="1">Homodimer. Within each dimer, one monomer is responsible for RNA recognition and catalysis, while the other monomer binds to the replacement base PreQ1.</text>
</comment>
<comment type="similarity">
    <text evidence="1">Belongs to the queuine tRNA-ribosyltransferase family.</text>
</comment>
<proteinExistence type="inferred from homology"/>
<protein>
    <recommendedName>
        <fullName evidence="1">Queuine tRNA-ribosyltransferase</fullName>
        <ecNumber evidence="1">2.4.2.29</ecNumber>
    </recommendedName>
    <alternativeName>
        <fullName evidence="1">Guanine insertion enzyme</fullName>
    </alternativeName>
    <alternativeName>
        <fullName evidence="1">tRNA-guanine transglycosylase</fullName>
    </alternativeName>
</protein>
<feature type="chain" id="PRO_1000071572" description="Queuine tRNA-ribosyltransferase">
    <location>
        <begin position="1"/>
        <end position="379"/>
    </location>
</feature>
<feature type="region of interest" description="RNA binding" evidence="1">
    <location>
        <begin position="249"/>
        <end position="255"/>
    </location>
</feature>
<feature type="region of interest" description="RNA binding; important for wobble base 34 recognition" evidence="1">
    <location>
        <begin position="273"/>
        <end position="277"/>
    </location>
</feature>
<feature type="active site" description="Proton acceptor" evidence="1">
    <location>
        <position position="93"/>
    </location>
</feature>
<feature type="active site" description="Nucleophile" evidence="1">
    <location>
        <position position="268"/>
    </location>
</feature>
<feature type="binding site" evidence="1">
    <location>
        <begin position="93"/>
        <end position="97"/>
    </location>
    <ligand>
        <name>substrate</name>
    </ligand>
</feature>
<feature type="binding site" evidence="1">
    <location>
        <position position="147"/>
    </location>
    <ligand>
        <name>substrate</name>
    </ligand>
</feature>
<feature type="binding site" evidence="1">
    <location>
        <position position="191"/>
    </location>
    <ligand>
        <name>substrate</name>
    </ligand>
</feature>
<feature type="binding site" evidence="1">
    <location>
        <position position="218"/>
    </location>
    <ligand>
        <name>substrate</name>
    </ligand>
</feature>
<feature type="binding site" evidence="1">
    <location>
        <position position="306"/>
    </location>
    <ligand>
        <name>Zn(2+)</name>
        <dbReference type="ChEBI" id="CHEBI:29105"/>
    </ligand>
</feature>
<feature type="binding site" evidence="1">
    <location>
        <position position="308"/>
    </location>
    <ligand>
        <name>Zn(2+)</name>
        <dbReference type="ChEBI" id="CHEBI:29105"/>
    </ligand>
</feature>
<feature type="binding site" evidence="1">
    <location>
        <position position="311"/>
    </location>
    <ligand>
        <name>Zn(2+)</name>
        <dbReference type="ChEBI" id="CHEBI:29105"/>
    </ligand>
</feature>
<feature type="binding site" evidence="1">
    <location>
        <position position="337"/>
    </location>
    <ligand>
        <name>Zn(2+)</name>
        <dbReference type="ChEBI" id="CHEBI:29105"/>
    </ligand>
</feature>
<evidence type="ECO:0000255" key="1">
    <source>
        <dbReference type="HAMAP-Rule" id="MF_00168"/>
    </source>
</evidence>
<reference key="1">
    <citation type="journal article" date="2010" name="BMC Genomics">
        <title>A genomic perspective on the potential of Actinobacillus succinogenes for industrial succinate production.</title>
        <authorList>
            <person name="McKinlay J.B."/>
            <person name="Laivenieks M."/>
            <person name="Schindler B.D."/>
            <person name="McKinlay A.A."/>
            <person name="Siddaramappa S."/>
            <person name="Challacombe J.F."/>
            <person name="Lowry S.R."/>
            <person name="Clum A."/>
            <person name="Lapidus A.L."/>
            <person name="Burkhart K.B."/>
            <person name="Harkins V."/>
            <person name="Vieille C."/>
        </authorList>
    </citation>
    <scope>NUCLEOTIDE SEQUENCE [LARGE SCALE GENOMIC DNA]</scope>
    <source>
        <strain>ATCC 55618 / DSM 22257 / CCUG 43843 / 130Z</strain>
    </source>
</reference>
<organism>
    <name type="scientific">Actinobacillus succinogenes (strain ATCC 55618 / DSM 22257 / CCUG 43843 / 130Z)</name>
    <dbReference type="NCBI Taxonomy" id="339671"/>
    <lineage>
        <taxon>Bacteria</taxon>
        <taxon>Pseudomonadati</taxon>
        <taxon>Pseudomonadota</taxon>
        <taxon>Gammaproteobacteria</taxon>
        <taxon>Pasteurellales</taxon>
        <taxon>Pasteurellaceae</taxon>
        <taxon>Actinobacillus</taxon>
    </lineage>
</organism>
<name>TGT_ACTSZ</name>
<accession>A6VN75</accession>
<gene>
    <name evidence="1" type="primary">tgt</name>
    <name type="ordered locus">Asuc_1056</name>
</gene>
<sequence length="379" mass="43385">MKFKLKTTSGTARRGEMTFSRPQGEFTVQTPAFMPVGTYGTVKGMTPEEVRATGAEILLGNTFHLWLRPGQEVMRKHGDLHDFMQWHRPILTDSGGFQVFSLGKLRKITEEGVKFQNPINGERIFLSPEKSMEIQYDLGSDIVMIFDECTPYPATFDYAKKSMEMSLRWAQRSRDRFDELGNKNALFGIVQGGTFEELRKVSAEGLVDIGFDGYAVGGLAVGEPKEEMHRILEFTTPLLPADKPRYLMGVGKPEDLVEGVRRGIDMFDCVMPTRNARNGHLFVTDGIVKIRNAKYRDDTSALDPHCDCYTCRHYTKSYLYHLDKCGEILGARLNTIHNLRYYQRLMEEIRQAIEEDRFDDFVVEFYTRMGKEVPPLQKP</sequence>
<dbReference type="EC" id="2.4.2.29" evidence="1"/>
<dbReference type="EMBL" id="CP000746">
    <property type="protein sequence ID" value="ABR74422.1"/>
    <property type="molecule type" value="Genomic_DNA"/>
</dbReference>
<dbReference type="RefSeq" id="WP_012072799.1">
    <property type="nucleotide sequence ID" value="NC_009655.1"/>
</dbReference>
<dbReference type="SMR" id="A6VN75"/>
<dbReference type="STRING" id="339671.Asuc_1056"/>
<dbReference type="KEGG" id="asu:Asuc_1056"/>
<dbReference type="eggNOG" id="COG0343">
    <property type="taxonomic scope" value="Bacteria"/>
</dbReference>
<dbReference type="HOGENOM" id="CLU_022060_0_1_6"/>
<dbReference type="OrthoDB" id="9805417at2"/>
<dbReference type="UniPathway" id="UPA00392"/>
<dbReference type="Proteomes" id="UP000001114">
    <property type="component" value="Chromosome"/>
</dbReference>
<dbReference type="GO" id="GO:0005829">
    <property type="term" value="C:cytosol"/>
    <property type="evidence" value="ECO:0007669"/>
    <property type="project" value="TreeGrafter"/>
</dbReference>
<dbReference type="GO" id="GO:0046872">
    <property type="term" value="F:metal ion binding"/>
    <property type="evidence" value="ECO:0007669"/>
    <property type="project" value="UniProtKB-KW"/>
</dbReference>
<dbReference type="GO" id="GO:0008479">
    <property type="term" value="F:tRNA-guanosine(34) queuine transglycosylase activity"/>
    <property type="evidence" value="ECO:0007669"/>
    <property type="project" value="UniProtKB-UniRule"/>
</dbReference>
<dbReference type="GO" id="GO:0008616">
    <property type="term" value="P:queuosine biosynthetic process"/>
    <property type="evidence" value="ECO:0007669"/>
    <property type="project" value="UniProtKB-UniRule"/>
</dbReference>
<dbReference type="GO" id="GO:0002099">
    <property type="term" value="P:tRNA wobble guanine modification"/>
    <property type="evidence" value="ECO:0007669"/>
    <property type="project" value="TreeGrafter"/>
</dbReference>
<dbReference type="GO" id="GO:0101030">
    <property type="term" value="P:tRNA-guanine transglycosylation"/>
    <property type="evidence" value="ECO:0007669"/>
    <property type="project" value="InterPro"/>
</dbReference>
<dbReference type="FunFam" id="3.20.20.105:FF:000001">
    <property type="entry name" value="Queuine tRNA-ribosyltransferase"/>
    <property type="match status" value="1"/>
</dbReference>
<dbReference type="Gene3D" id="3.20.20.105">
    <property type="entry name" value="Queuine tRNA-ribosyltransferase-like"/>
    <property type="match status" value="1"/>
</dbReference>
<dbReference type="HAMAP" id="MF_00168">
    <property type="entry name" value="Q_tRNA_Tgt"/>
    <property type="match status" value="1"/>
</dbReference>
<dbReference type="InterPro" id="IPR050076">
    <property type="entry name" value="ArchSynthase1/Queuine_TRR"/>
</dbReference>
<dbReference type="InterPro" id="IPR004803">
    <property type="entry name" value="TGT"/>
</dbReference>
<dbReference type="InterPro" id="IPR036511">
    <property type="entry name" value="TGT-like_sf"/>
</dbReference>
<dbReference type="InterPro" id="IPR002616">
    <property type="entry name" value="tRNA_ribo_trans-like"/>
</dbReference>
<dbReference type="NCBIfam" id="TIGR00430">
    <property type="entry name" value="Q_tRNA_tgt"/>
    <property type="match status" value="1"/>
</dbReference>
<dbReference type="NCBIfam" id="TIGR00449">
    <property type="entry name" value="tgt_general"/>
    <property type="match status" value="1"/>
</dbReference>
<dbReference type="PANTHER" id="PTHR46499">
    <property type="entry name" value="QUEUINE TRNA-RIBOSYLTRANSFERASE"/>
    <property type="match status" value="1"/>
</dbReference>
<dbReference type="PANTHER" id="PTHR46499:SF1">
    <property type="entry name" value="QUEUINE TRNA-RIBOSYLTRANSFERASE"/>
    <property type="match status" value="1"/>
</dbReference>
<dbReference type="Pfam" id="PF01702">
    <property type="entry name" value="TGT"/>
    <property type="match status" value="1"/>
</dbReference>
<dbReference type="SUPFAM" id="SSF51713">
    <property type="entry name" value="tRNA-guanine transglycosylase"/>
    <property type="match status" value="1"/>
</dbReference>
<keyword id="KW-0328">Glycosyltransferase</keyword>
<keyword id="KW-0479">Metal-binding</keyword>
<keyword id="KW-0671">Queuosine biosynthesis</keyword>
<keyword id="KW-1185">Reference proteome</keyword>
<keyword id="KW-0808">Transferase</keyword>
<keyword id="KW-0819">tRNA processing</keyword>
<keyword id="KW-0862">Zinc</keyword>